<feature type="chain" id="PRO_0000308624" description="Hydroxyproline dehydrogenase">
    <location>
        <begin position="1"/>
        <end position="456"/>
    </location>
</feature>
<feature type="modified residue" description="N6-acetyllysine" evidence="5">
    <location>
        <position position="310"/>
    </location>
</feature>
<feature type="modified residue" description="N6-acetyllysine" evidence="5">
    <location>
        <position position="320"/>
    </location>
</feature>
<feature type="sequence conflict" description="In Ref. 1; AAF21466." evidence="3" ref="1">
    <original>R</original>
    <variation>H</variation>
    <location>
        <position position="337"/>
    </location>
</feature>
<feature type="sequence conflict" description="In Ref. 1; AAF21466." evidence="3" ref="1">
    <original>E</original>
    <variation>K</variation>
    <location>
        <position position="416"/>
    </location>
</feature>
<dbReference type="EC" id="1.5.5.3" evidence="1"/>
<dbReference type="EC" id="1.5.5.2" evidence="1"/>
<dbReference type="EMBL" id="U80019">
    <property type="protein sequence ID" value="AAF21466.1"/>
    <property type="status" value="ALT_INIT"/>
    <property type="molecule type" value="mRNA"/>
</dbReference>
<dbReference type="EMBL" id="AF222851">
    <property type="protein sequence ID" value="AAQ13907.1"/>
    <property type="status" value="ALT_INIT"/>
    <property type="molecule type" value="mRNA"/>
</dbReference>
<dbReference type="EMBL" id="AK050141">
    <property type="protein sequence ID" value="BAC34090.1"/>
    <property type="molecule type" value="mRNA"/>
</dbReference>
<dbReference type="EMBL" id="BC018182">
    <property type="protein sequence ID" value="AAH18182.1"/>
    <property type="molecule type" value="mRNA"/>
</dbReference>
<dbReference type="CCDS" id="CCDS21093.1"/>
<dbReference type="RefSeq" id="NP_062419.2">
    <property type="nucleotide sequence ID" value="NM_019546.5"/>
</dbReference>
<dbReference type="SMR" id="Q8VCZ9"/>
<dbReference type="FunCoup" id="Q8VCZ9">
    <property type="interactions" value="616"/>
</dbReference>
<dbReference type="STRING" id="10090.ENSMUSP00000062214"/>
<dbReference type="iPTMnet" id="Q8VCZ9"/>
<dbReference type="PhosphoSitePlus" id="Q8VCZ9"/>
<dbReference type="SwissPalm" id="Q8VCZ9"/>
<dbReference type="jPOST" id="Q8VCZ9"/>
<dbReference type="PaxDb" id="10090-ENSMUSP00000062214"/>
<dbReference type="ProteomicsDB" id="269514"/>
<dbReference type="Antibodypedia" id="44579">
    <property type="antibodies" value="77 antibodies from 16 providers"/>
</dbReference>
<dbReference type="DNASU" id="56189"/>
<dbReference type="Ensembl" id="ENSMUST00000058280.13">
    <property type="protein sequence ID" value="ENSMUSP00000062214.7"/>
    <property type="gene ID" value="ENSMUSG00000036892.13"/>
</dbReference>
<dbReference type="GeneID" id="56189"/>
<dbReference type="KEGG" id="mmu:56189"/>
<dbReference type="UCSC" id="uc009geo.1">
    <property type="organism name" value="mouse"/>
</dbReference>
<dbReference type="AGR" id="MGI:1929093"/>
<dbReference type="CTD" id="58510"/>
<dbReference type="MGI" id="MGI:1929093">
    <property type="gene designation" value="Prodh2"/>
</dbReference>
<dbReference type="VEuPathDB" id="HostDB:ENSMUSG00000036892"/>
<dbReference type="eggNOG" id="KOG0186">
    <property type="taxonomic scope" value="Eukaryota"/>
</dbReference>
<dbReference type="GeneTree" id="ENSGT00390000006265"/>
<dbReference type="HOGENOM" id="CLU_018202_3_2_1"/>
<dbReference type="InParanoid" id="Q8VCZ9"/>
<dbReference type="OMA" id="WMQDAAD"/>
<dbReference type="OrthoDB" id="5464at2759"/>
<dbReference type="PhylomeDB" id="Q8VCZ9"/>
<dbReference type="TreeFam" id="TF313544"/>
<dbReference type="Reactome" id="R-MMU-389661">
    <property type="pathway name" value="Glyoxylate metabolism and glycine degradation"/>
</dbReference>
<dbReference type="Reactome" id="R-MMU-70688">
    <property type="pathway name" value="Proline catabolism"/>
</dbReference>
<dbReference type="BioGRID-ORCS" id="56189">
    <property type="hits" value="0 hits in 76 CRISPR screens"/>
</dbReference>
<dbReference type="ChiTaRS" id="Prodh2">
    <property type="organism name" value="mouse"/>
</dbReference>
<dbReference type="PRO" id="PR:Q8VCZ9"/>
<dbReference type="Proteomes" id="UP000000589">
    <property type="component" value="Chromosome 7"/>
</dbReference>
<dbReference type="RNAct" id="Q8VCZ9">
    <property type="molecule type" value="protein"/>
</dbReference>
<dbReference type="Bgee" id="ENSMUSG00000036892">
    <property type="expression patterns" value="Expressed in left lobe of liver and 53 other cell types or tissues"/>
</dbReference>
<dbReference type="ExpressionAtlas" id="Q8VCZ9">
    <property type="expression patterns" value="baseline and differential"/>
</dbReference>
<dbReference type="GO" id="GO:0005743">
    <property type="term" value="C:mitochondrial inner membrane"/>
    <property type="evidence" value="ECO:0007005"/>
    <property type="project" value="MGI"/>
</dbReference>
<dbReference type="GO" id="GO:0005739">
    <property type="term" value="C:mitochondrion"/>
    <property type="evidence" value="ECO:0007005"/>
    <property type="project" value="MGI"/>
</dbReference>
<dbReference type="GO" id="GO:0016645">
    <property type="term" value="F:oxidoreductase activity, acting on the CH-NH group of donors"/>
    <property type="evidence" value="ECO:0000250"/>
    <property type="project" value="UniProtKB"/>
</dbReference>
<dbReference type="GO" id="GO:0004657">
    <property type="term" value="F:proline dehydrogenase activity"/>
    <property type="evidence" value="ECO:0007669"/>
    <property type="project" value="UniProtKB-EC"/>
</dbReference>
<dbReference type="GO" id="GO:0006562">
    <property type="term" value="P:proline catabolic process"/>
    <property type="evidence" value="ECO:0007669"/>
    <property type="project" value="InterPro"/>
</dbReference>
<dbReference type="Gene3D" id="3.20.20.220">
    <property type="match status" value="1"/>
</dbReference>
<dbReference type="InterPro" id="IPR029041">
    <property type="entry name" value="FAD-linked_oxidoreductase-like"/>
</dbReference>
<dbReference type="InterPro" id="IPR002872">
    <property type="entry name" value="Proline_DH_dom"/>
</dbReference>
<dbReference type="InterPro" id="IPR015659">
    <property type="entry name" value="Proline_oxidase"/>
</dbReference>
<dbReference type="PANTHER" id="PTHR13914:SF29">
    <property type="entry name" value="HYDROXYPROLINE DEHYDROGENASE"/>
    <property type="match status" value="1"/>
</dbReference>
<dbReference type="PANTHER" id="PTHR13914">
    <property type="entry name" value="PROLINE OXIDASE"/>
    <property type="match status" value="1"/>
</dbReference>
<dbReference type="Pfam" id="PF01619">
    <property type="entry name" value="Pro_dh"/>
    <property type="match status" value="1"/>
</dbReference>
<dbReference type="SUPFAM" id="SSF51730">
    <property type="entry name" value="FAD-linked oxidoreductase"/>
    <property type="match status" value="1"/>
</dbReference>
<proteinExistence type="evidence at protein level"/>
<name>HYPDH_MOUSE</name>
<organism>
    <name type="scientific">Mus musculus</name>
    <name type="common">Mouse</name>
    <dbReference type="NCBI Taxonomy" id="10090"/>
    <lineage>
        <taxon>Eukaryota</taxon>
        <taxon>Metazoa</taxon>
        <taxon>Chordata</taxon>
        <taxon>Craniata</taxon>
        <taxon>Vertebrata</taxon>
        <taxon>Euteleostomi</taxon>
        <taxon>Mammalia</taxon>
        <taxon>Eutheria</taxon>
        <taxon>Euarchontoglires</taxon>
        <taxon>Glires</taxon>
        <taxon>Rodentia</taxon>
        <taxon>Myomorpha</taxon>
        <taxon>Muroidea</taxon>
        <taxon>Muridae</taxon>
        <taxon>Murinae</taxon>
        <taxon>Mus</taxon>
        <taxon>Mus</taxon>
    </lineage>
</organism>
<keyword id="KW-0007">Acetylation</keyword>
<keyword id="KW-0274">FAD</keyword>
<keyword id="KW-0285">Flavoprotein</keyword>
<keyword id="KW-0560">Oxidoreductase</keyword>
<keyword id="KW-0642">Proline metabolism</keyword>
<keyword id="KW-1185">Reference proteome</keyword>
<sequence length="456" mass="50723">MIWTRLPLYGPSKPSTGGWQPLRFDGGAFHVKGTAELARALLVLRLCAWPPLVTHGLAFQAWSQRLLGSRLSGALLRASIYGQFVAGETAEEVRNCVGQLQALGLQPLLAVPTEEEPDSTAKTSEVWYEENLSAMLRCVDLSRALVDAHGPARNSLMQLKVTALASTRLCKELSAWIQRPRGSSELSPERLAEAMDSGRNLQLSCLSTEQNQHLQASLSRLHRVAQHARAKCVRLLVDAEYTFINPALSLLVAALAVRWNSPEEGGPWVWNTYQAYLKDTHQRLEQDAEAAHKAGLAFGVKLVRGAYLDKERSMTQLQGKEDCTQPDYEATSRSYSRCLELMLRCVSNHGPPCHLMVASHNEESVRQATKRMWELGIPLDGPVCFGQLLGMCDHVSLALGQAGYMVYKSIPYGCLEEVIPYLIRRAQENRSVLQGARREQALLSQELWRRLLGRTA</sequence>
<comment type="function">
    <text evidence="1">Dehydrogenase that converts trans-4-L-hydroxyproline to delta-1-pyrroline-3-hydroxy-5-carboxylate (Hyp) using ubiquinone-10 as the terminal electron acceptor. Can also use proline as a substrate but with a very much lower efficiency. Does not react with other diastereomers of Hyp: trans-4-D-hydroxyproline and cis-4-L-hydroxyproline. Ubiquininone analogs such as menadione, duroquinone and ubiquinone-1 react more efficiently than oxygen as the terminal electron acceptor during catalysis.</text>
</comment>
<comment type="catalytic activity">
    <reaction evidence="1">
        <text>trans-4-hydroxy-L-proline + a quinone = (3R,5S)-1-pyrroline-3-hydroxy-5-carboxylate + a quinol + H(+)</text>
        <dbReference type="Rhea" id="RHEA:52512"/>
        <dbReference type="ChEBI" id="CHEBI:15378"/>
        <dbReference type="ChEBI" id="CHEBI:24646"/>
        <dbReference type="ChEBI" id="CHEBI:58375"/>
        <dbReference type="ChEBI" id="CHEBI:62612"/>
        <dbReference type="ChEBI" id="CHEBI:132124"/>
        <dbReference type="EC" id="1.5.5.3"/>
    </reaction>
</comment>
<comment type="catalytic activity">
    <reaction evidence="1">
        <text>L-proline + a quinone = (S)-1-pyrroline-5-carboxylate + a quinol + H(+)</text>
        <dbReference type="Rhea" id="RHEA:23784"/>
        <dbReference type="ChEBI" id="CHEBI:15378"/>
        <dbReference type="ChEBI" id="CHEBI:17388"/>
        <dbReference type="ChEBI" id="CHEBI:24646"/>
        <dbReference type="ChEBI" id="CHEBI:60039"/>
        <dbReference type="ChEBI" id="CHEBI:132124"/>
        <dbReference type="EC" id="1.5.5.2"/>
    </reaction>
</comment>
<comment type="cofactor">
    <cofactor evidence="1">
        <name>FAD</name>
        <dbReference type="ChEBI" id="CHEBI:57692"/>
    </cofactor>
</comment>
<comment type="developmental stage">
    <text evidence="2">Expressed in liver at 14 dpc. Expression level increases at P5 and decreases after P21.</text>
</comment>
<comment type="induction">
    <text evidence="2">In liver, by TCF1 and HNF4A.</text>
</comment>
<comment type="similarity">
    <text evidence="3">Belongs to the proline oxidase family.</text>
</comment>
<comment type="sequence caution" evidence="3">
    <conflict type="erroneous initiation">
        <sequence resource="EMBL-CDS" id="AAF21466"/>
    </conflict>
    <text>Extended N-terminus.</text>
</comment>
<comment type="sequence caution" evidence="3">
    <conflict type="erroneous initiation">
        <sequence resource="EMBL-CDS" id="AAQ13907"/>
    </conflict>
    <text>Extended N-terminus.</text>
</comment>
<evidence type="ECO:0000250" key="1">
    <source>
        <dbReference type="UniProtKB" id="Q9UF12"/>
    </source>
</evidence>
<evidence type="ECO:0000269" key="2">
    <source>
    </source>
</evidence>
<evidence type="ECO:0000305" key="3"/>
<evidence type="ECO:0000312" key="4">
    <source>
        <dbReference type="MGI" id="MGI:1929093"/>
    </source>
</evidence>
<evidence type="ECO:0007744" key="5">
    <source>
    </source>
</evidence>
<reference key="1">
    <citation type="submission" date="1996-11" db="EMBL/GenBank/DDBJ databases">
        <authorList>
            <person name="Lin W.-W."/>
            <person name="Hu C.A."/>
            <person name="Valle D."/>
        </authorList>
    </citation>
    <scope>NUCLEOTIDE SEQUENCE [MRNA]</scope>
</reference>
<reference key="2">
    <citation type="submission" date="2000-01" db="EMBL/GenBank/DDBJ databases">
        <authorList>
            <person name="Yang Q."/>
            <person name="Tian Y."/>
            <person name="Wallner E.I."/>
            <person name="Kanwar Y.S."/>
        </authorList>
    </citation>
    <scope>NUCLEOTIDE SEQUENCE [MRNA]</scope>
</reference>
<reference key="3">
    <citation type="journal article" date="2005" name="Science">
        <title>The transcriptional landscape of the mammalian genome.</title>
        <authorList>
            <person name="Carninci P."/>
            <person name="Kasukawa T."/>
            <person name="Katayama S."/>
            <person name="Gough J."/>
            <person name="Frith M.C."/>
            <person name="Maeda N."/>
            <person name="Oyama R."/>
            <person name="Ravasi T."/>
            <person name="Lenhard B."/>
            <person name="Wells C."/>
            <person name="Kodzius R."/>
            <person name="Shimokawa K."/>
            <person name="Bajic V.B."/>
            <person name="Brenner S.E."/>
            <person name="Batalov S."/>
            <person name="Forrest A.R."/>
            <person name="Zavolan M."/>
            <person name="Davis M.J."/>
            <person name="Wilming L.G."/>
            <person name="Aidinis V."/>
            <person name="Allen J.E."/>
            <person name="Ambesi-Impiombato A."/>
            <person name="Apweiler R."/>
            <person name="Aturaliya R.N."/>
            <person name="Bailey T.L."/>
            <person name="Bansal M."/>
            <person name="Baxter L."/>
            <person name="Beisel K.W."/>
            <person name="Bersano T."/>
            <person name="Bono H."/>
            <person name="Chalk A.M."/>
            <person name="Chiu K.P."/>
            <person name="Choudhary V."/>
            <person name="Christoffels A."/>
            <person name="Clutterbuck D.R."/>
            <person name="Crowe M.L."/>
            <person name="Dalla E."/>
            <person name="Dalrymple B.P."/>
            <person name="de Bono B."/>
            <person name="Della Gatta G."/>
            <person name="di Bernardo D."/>
            <person name="Down T."/>
            <person name="Engstrom P."/>
            <person name="Fagiolini M."/>
            <person name="Faulkner G."/>
            <person name="Fletcher C.F."/>
            <person name="Fukushima T."/>
            <person name="Furuno M."/>
            <person name="Futaki S."/>
            <person name="Gariboldi M."/>
            <person name="Georgii-Hemming P."/>
            <person name="Gingeras T.R."/>
            <person name="Gojobori T."/>
            <person name="Green R.E."/>
            <person name="Gustincich S."/>
            <person name="Harbers M."/>
            <person name="Hayashi Y."/>
            <person name="Hensch T.K."/>
            <person name="Hirokawa N."/>
            <person name="Hill D."/>
            <person name="Huminiecki L."/>
            <person name="Iacono M."/>
            <person name="Ikeo K."/>
            <person name="Iwama A."/>
            <person name="Ishikawa T."/>
            <person name="Jakt M."/>
            <person name="Kanapin A."/>
            <person name="Katoh M."/>
            <person name="Kawasawa Y."/>
            <person name="Kelso J."/>
            <person name="Kitamura H."/>
            <person name="Kitano H."/>
            <person name="Kollias G."/>
            <person name="Krishnan S.P."/>
            <person name="Kruger A."/>
            <person name="Kummerfeld S.K."/>
            <person name="Kurochkin I.V."/>
            <person name="Lareau L.F."/>
            <person name="Lazarevic D."/>
            <person name="Lipovich L."/>
            <person name="Liu J."/>
            <person name="Liuni S."/>
            <person name="McWilliam S."/>
            <person name="Madan Babu M."/>
            <person name="Madera M."/>
            <person name="Marchionni L."/>
            <person name="Matsuda H."/>
            <person name="Matsuzawa S."/>
            <person name="Miki H."/>
            <person name="Mignone F."/>
            <person name="Miyake S."/>
            <person name="Morris K."/>
            <person name="Mottagui-Tabar S."/>
            <person name="Mulder N."/>
            <person name="Nakano N."/>
            <person name="Nakauchi H."/>
            <person name="Ng P."/>
            <person name="Nilsson R."/>
            <person name="Nishiguchi S."/>
            <person name="Nishikawa S."/>
            <person name="Nori F."/>
            <person name="Ohara O."/>
            <person name="Okazaki Y."/>
            <person name="Orlando V."/>
            <person name="Pang K.C."/>
            <person name="Pavan W.J."/>
            <person name="Pavesi G."/>
            <person name="Pesole G."/>
            <person name="Petrovsky N."/>
            <person name="Piazza S."/>
            <person name="Reed J."/>
            <person name="Reid J.F."/>
            <person name="Ring B.Z."/>
            <person name="Ringwald M."/>
            <person name="Rost B."/>
            <person name="Ruan Y."/>
            <person name="Salzberg S.L."/>
            <person name="Sandelin A."/>
            <person name="Schneider C."/>
            <person name="Schoenbach C."/>
            <person name="Sekiguchi K."/>
            <person name="Semple C.A."/>
            <person name="Seno S."/>
            <person name="Sessa L."/>
            <person name="Sheng Y."/>
            <person name="Shibata Y."/>
            <person name="Shimada H."/>
            <person name="Shimada K."/>
            <person name="Silva D."/>
            <person name="Sinclair B."/>
            <person name="Sperling S."/>
            <person name="Stupka E."/>
            <person name="Sugiura K."/>
            <person name="Sultana R."/>
            <person name="Takenaka Y."/>
            <person name="Taki K."/>
            <person name="Tammoja K."/>
            <person name="Tan S.L."/>
            <person name="Tang S."/>
            <person name="Taylor M.S."/>
            <person name="Tegner J."/>
            <person name="Teichmann S.A."/>
            <person name="Ueda H.R."/>
            <person name="van Nimwegen E."/>
            <person name="Verardo R."/>
            <person name="Wei C.L."/>
            <person name="Yagi K."/>
            <person name="Yamanishi H."/>
            <person name="Zabarovsky E."/>
            <person name="Zhu S."/>
            <person name="Zimmer A."/>
            <person name="Hide W."/>
            <person name="Bult C."/>
            <person name="Grimmond S.M."/>
            <person name="Teasdale R.D."/>
            <person name="Liu E.T."/>
            <person name="Brusic V."/>
            <person name="Quackenbush J."/>
            <person name="Wahlestedt C."/>
            <person name="Mattick J.S."/>
            <person name="Hume D.A."/>
            <person name="Kai C."/>
            <person name="Sasaki D."/>
            <person name="Tomaru Y."/>
            <person name="Fukuda S."/>
            <person name="Kanamori-Katayama M."/>
            <person name="Suzuki M."/>
            <person name="Aoki J."/>
            <person name="Arakawa T."/>
            <person name="Iida J."/>
            <person name="Imamura K."/>
            <person name="Itoh M."/>
            <person name="Kato T."/>
            <person name="Kawaji H."/>
            <person name="Kawagashira N."/>
            <person name="Kawashima T."/>
            <person name="Kojima M."/>
            <person name="Kondo S."/>
            <person name="Konno H."/>
            <person name="Nakano K."/>
            <person name="Ninomiya N."/>
            <person name="Nishio T."/>
            <person name="Okada M."/>
            <person name="Plessy C."/>
            <person name="Shibata K."/>
            <person name="Shiraki T."/>
            <person name="Suzuki S."/>
            <person name="Tagami M."/>
            <person name="Waki K."/>
            <person name="Watahiki A."/>
            <person name="Okamura-Oho Y."/>
            <person name="Suzuki H."/>
            <person name="Kawai J."/>
            <person name="Hayashizaki Y."/>
        </authorList>
    </citation>
    <scope>NUCLEOTIDE SEQUENCE [LARGE SCALE MRNA]</scope>
    <source>
        <strain>C57BL/6J</strain>
        <tissue>Liver</tissue>
    </source>
</reference>
<reference key="4">
    <citation type="journal article" date="2004" name="Genome Res.">
        <title>The status, quality, and expansion of the NIH full-length cDNA project: the Mammalian Gene Collection (MGC).</title>
        <authorList>
            <consortium name="The MGC Project Team"/>
        </authorList>
    </citation>
    <scope>NUCLEOTIDE SEQUENCE [LARGE SCALE MRNA]</scope>
    <source>
        <strain>FVB/N</strain>
        <tissue>Liver</tissue>
    </source>
</reference>
<reference key="5">
    <citation type="journal article" date="2004" name="FEBS Lett.">
        <title>Hepatocyte nuclear factors 1alpha and 4alpha control expression of proline oxidase in adult liver.</title>
        <authorList>
            <person name="Kamiya A."/>
            <person name="Inoue Y."/>
            <person name="Kodama T."/>
            <person name="Gonzalez F.J."/>
        </authorList>
    </citation>
    <scope>INDUCTION BY TCF1 AND HNF4A</scope>
    <scope>DEVELOPMENTAL STAGE</scope>
</reference>
<reference key="6">
    <citation type="journal article" date="2010" name="Cell">
        <title>A tissue-specific atlas of mouse protein phosphorylation and expression.</title>
        <authorList>
            <person name="Huttlin E.L."/>
            <person name="Jedrychowski M.P."/>
            <person name="Elias J.E."/>
            <person name="Goswami T."/>
            <person name="Rad R."/>
            <person name="Beausoleil S.A."/>
            <person name="Villen J."/>
            <person name="Haas W."/>
            <person name="Sowa M.E."/>
            <person name="Gygi S.P."/>
        </authorList>
    </citation>
    <scope>IDENTIFICATION BY MASS SPECTROMETRY [LARGE SCALE ANALYSIS]</scope>
    <source>
        <tissue>Kidney</tissue>
        <tissue>Liver</tissue>
    </source>
</reference>
<reference key="7">
    <citation type="journal article" date="2013" name="Proc. Natl. Acad. Sci. U.S.A.">
        <title>Label-free quantitative proteomics of the lysine acetylome in mitochondria identifies substrates of SIRT3 in metabolic pathways.</title>
        <authorList>
            <person name="Rardin M.J."/>
            <person name="Newman J.C."/>
            <person name="Held J.M."/>
            <person name="Cusack M.P."/>
            <person name="Sorensen D.J."/>
            <person name="Li B."/>
            <person name="Schilling B."/>
            <person name="Mooney S.D."/>
            <person name="Kahn C.R."/>
            <person name="Verdin E."/>
            <person name="Gibson B.W."/>
        </authorList>
    </citation>
    <scope>ACETYLATION [LARGE SCALE ANALYSIS] AT LYS-310 AND LYS-320</scope>
    <scope>IDENTIFICATION BY MASS SPECTROMETRY [LARGE SCALE ANALYSIS]</scope>
    <source>
        <tissue>Liver</tissue>
    </source>
</reference>
<protein>
    <recommendedName>
        <fullName evidence="1">Hydroxyproline dehydrogenase</fullName>
        <shortName evidence="1">HYPDH</shortName>
        <ecNumber evidence="1">1.5.5.3</ecNumber>
    </recommendedName>
    <alternativeName>
        <fullName evidence="3">Kidney and liver proline oxidase 1</fullName>
    </alternativeName>
    <alternativeName>
        <fullName evidence="3">MmPOX1</fullName>
    </alternativeName>
    <alternativeName>
        <fullName evidence="1">Probable proline dehydrogenase 2</fullName>
        <ecNumber evidence="1">1.5.5.2</ecNumber>
    </alternativeName>
    <alternativeName>
        <fullName>Probable proline oxidase 2</fullName>
    </alternativeName>
    <alternativeName>
        <fullName>Proline oxidase-like protein</fullName>
        <shortName>PO</shortName>
        <shortName>Proline oxidase</shortName>
    </alternativeName>
</protein>
<gene>
    <name evidence="4" type="primary">Prodh2</name>
    <name evidence="1" type="synonym">Hypdh</name>
</gene>
<accession>Q8VCZ9</accession>
<accession>Q2V058</accession>
<accession>Q9QX62</accession>